<evidence type="ECO:0000255" key="1">
    <source>
        <dbReference type="HAMAP-Rule" id="MF_01080"/>
    </source>
</evidence>
<protein>
    <recommendedName>
        <fullName evidence="1">tRNA pseudouridine synthase B</fullName>
        <ecNumber evidence="1">5.4.99.25</ecNumber>
    </recommendedName>
    <alternativeName>
        <fullName evidence="1">tRNA pseudouridine(55) synthase</fullName>
        <shortName evidence="1">Psi55 synthase</shortName>
    </alternativeName>
    <alternativeName>
        <fullName evidence="1">tRNA pseudouridylate synthase</fullName>
    </alternativeName>
    <alternativeName>
        <fullName evidence="1">tRNA-uridine isomerase</fullName>
    </alternativeName>
</protein>
<comment type="function">
    <text evidence="1">Responsible for synthesis of pseudouridine from uracil-55 in the psi GC loop of transfer RNAs.</text>
</comment>
<comment type="catalytic activity">
    <reaction evidence="1">
        <text>uridine(55) in tRNA = pseudouridine(55) in tRNA</text>
        <dbReference type="Rhea" id="RHEA:42532"/>
        <dbReference type="Rhea" id="RHEA-COMP:10101"/>
        <dbReference type="Rhea" id="RHEA-COMP:10102"/>
        <dbReference type="ChEBI" id="CHEBI:65314"/>
        <dbReference type="ChEBI" id="CHEBI:65315"/>
        <dbReference type="EC" id="5.4.99.25"/>
    </reaction>
</comment>
<comment type="similarity">
    <text evidence="1">Belongs to the pseudouridine synthase TruB family. Type 1 subfamily.</text>
</comment>
<proteinExistence type="inferred from homology"/>
<dbReference type="EC" id="5.4.99.25" evidence="1"/>
<dbReference type="EMBL" id="AE005673">
    <property type="protein sequence ID" value="AAK22024.1"/>
    <property type="molecule type" value="Genomic_DNA"/>
</dbReference>
<dbReference type="PIR" id="D87253">
    <property type="entry name" value="D87253"/>
</dbReference>
<dbReference type="RefSeq" id="NP_418856.1">
    <property type="nucleotide sequence ID" value="NC_002696.2"/>
</dbReference>
<dbReference type="RefSeq" id="WP_010917926.1">
    <property type="nucleotide sequence ID" value="NC_002696.2"/>
</dbReference>
<dbReference type="SMR" id="P58063"/>
<dbReference type="STRING" id="190650.CC_0036"/>
<dbReference type="EnsemblBacteria" id="AAK22024">
    <property type="protein sequence ID" value="AAK22024"/>
    <property type="gene ID" value="CC_0036"/>
</dbReference>
<dbReference type="KEGG" id="ccr:CC_0036"/>
<dbReference type="PATRIC" id="fig|190650.5.peg.36"/>
<dbReference type="eggNOG" id="COG0130">
    <property type="taxonomic scope" value="Bacteria"/>
</dbReference>
<dbReference type="HOGENOM" id="CLU_032087_0_3_5"/>
<dbReference type="BioCyc" id="CAULO:CC0036-MONOMER"/>
<dbReference type="Proteomes" id="UP000001816">
    <property type="component" value="Chromosome"/>
</dbReference>
<dbReference type="GO" id="GO:0003723">
    <property type="term" value="F:RNA binding"/>
    <property type="evidence" value="ECO:0007669"/>
    <property type="project" value="InterPro"/>
</dbReference>
<dbReference type="GO" id="GO:0160148">
    <property type="term" value="F:tRNA pseudouridine(55) synthase activity"/>
    <property type="evidence" value="ECO:0007669"/>
    <property type="project" value="UniProtKB-EC"/>
</dbReference>
<dbReference type="GO" id="GO:1990481">
    <property type="term" value="P:mRNA pseudouridine synthesis"/>
    <property type="evidence" value="ECO:0007669"/>
    <property type="project" value="TreeGrafter"/>
</dbReference>
<dbReference type="GO" id="GO:0031119">
    <property type="term" value="P:tRNA pseudouridine synthesis"/>
    <property type="evidence" value="ECO:0007669"/>
    <property type="project" value="UniProtKB-UniRule"/>
</dbReference>
<dbReference type="CDD" id="cd02573">
    <property type="entry name" value="PseudoU_synth_EcTruB"/>
    <property type="match status" value="1"/>
</dbReference>
<dbReference type="Gene3D" id="3.30.2350.10">
    <property type="entry name" value="Pseudouridine synthase"/>
    <property type="match status" value="1"/>
</dbReference>
<dbReference type="HAMAP" id="MF_01080">
    <property type="entry name" value="TruB_bact"/>
    <property type="match status" value="1"/>
</dbReference>
<dbReference type="InterPro" id="IPR020103">
    <property type="entry name" value="PsdUridine_synth_cat_dom_sf"/>
</dbReference>
<dbReference type="InterPro" id="IPR002501">
    <property type="entry name" value="PsdUridine_synth_N"/>
</dbReference>
<dbReference type="InterPro" id="IPR014780">
    <property type="entry name" value="tRNA_psdUridine_synth_TruB"/>
</dbReference>
<dbReference type="InterPro" id="IPR032819">
    <property type="entry name" value="TruB_C"/>
</dbReference>
<dbReference type="NCBIfam" id="TIGR00431">
    <property type="entry name" value="TruB"/>
    <property type="match status" value="1"/>
</dbReference>
<dbReference type="PANTHER" id="PTHR13767:SF2">
    <property type="entry name" value="PSEUDOURIDYLATE SYNTHASE TRUB1"/>
    <property type="match status" value="1"/>
</dbReference>
<dbReference type="PANTHER" id="PTHR13767">
    <property type="entry name" value="TRNA-PSEUDOURIDINE SYNTHASE"/>
    <property type="match status" value="1"/>
</dbReference>
<dbReference type="Pfam" id="PF16198">
    <property type="entry name" value="TruB_C_2"/>
    <property type="match status" value="1"/>
</dbReference>
<dbReference type="Pfam" id="PF01509">
    <property type="entry name" value="TruB_N"/>
    <property type="match status" value="1"/>
</dbReference>
<dbReference type="SUPFAM" id="SSF55120">
    <property type="entry name" value="Pseudouridine synthase"/>
    <property type="match status" value="1"/>
</dbReference>
<sequence>MARRKKGDAVSGWLCLDKPYDLTSTTAVSRVRRAFNAQKGGHAGTLDPLATGILPIALGEATKTVPFLMDADKAYRFTIAWGRDTTTLDREGETTGTSDVRPTREQVEAALPAFIGEVDQIPPNFSAIKVDGERAYDLARDGVEFELPTRKVSIFDLKVVDQPDADHVTLTMECGKGTYVRAVVRDLAKALGTCGHVADLRRTRVGGFSEASAIALETLENLSYEARLSEALLPVETALDDIPALAVTDEDAFRLAQGRAIVLLPRQVETLKAELPPGDRTVSAMSGDRLVALCEMRAGKLNPVRVFQLT</sequence>
<accession>P58063</accession>
<reference key="1">
    <citation type="journal article" date="2001" name="Proc. Natl. Acad. Sci. U.S.A.">
        <title>Complete genome sequence of Caulobacter crescentus.</title>
        <authorList>
            <person name="Nierman W.C."/>
            <person name="Feldblyum T.V."/>
            <person name="Laub M.T."/>
            <person name="Paulsen I.T."/>
            <person name="Nelson K.E."/>
            <person name="Eisen J.A."/>
            <person name="Heidelberg J.F."/>
            <person name="Alley M.R.K."/>
            <person name="Ohta N."/>
            <person name="Maddock J.R."/>
            <person name="Potocka I."/>
            <person name="Nelson W.C."/>
            <person name="Newton A."/>
            <person name="Stephens C."/>
            <person name="Phadke N.D."/>
            <person name="Ely B."/>
            <person name="DeBoy R.T."/>
            <person name="Dodson R.J."/>
            <person name="Durkin A.S."/>
            <person name="Gwinn M.L."/>
            <person name="Haft D.H."/>
            <person name="Kolonay J.F."/>
            <person name="Smit J."/>
            <person name="Craven M.B."/>
            <person name="Khouri H.M."/>
            <person name="Shetty J."/>
            <person name="Berry K.J."/>
            <person name="Utterback T.R."/>
            <person name="Tran K."/>
            <person name="Wolf A.M."/>
            <person name="Vamathevan J.J."/>
            <person name="Ermolaeva M.D."/>
            <person name="White O."/>
            <person name="Salzberg S.L."/>
            <person name="Venter J.C."/>
            <person name="Shapiro L."/>
            <person name="Fraser C.M."/>
        </authorList>
    </citation>
    <scope>NUCLEOTIDE SEQUENCE [LARGE SCALE GENOMIC DNA]</scope>
    <source>
        <strain>ATCC 19089 / CIP 103742 / CB 15</strain>
    </source>
</reference>
<keyword id="KW-0413">Isomerase</keyword>
<keyword id="KW-1185">Reference proteome</keyword>
<keyword id="KW-0819">tRNA processing</keyword>
<organism>
    <name type="scientific">Caulobacter vibrioides (strain ATCC 19089 / CIP 103742 / CB 15)</name>
    <name type="common">Caulobacter crescentus</name>
    <dbReference type="NCBI Taxonomy" id="190650"/>
    <lineage>
        <taxon>Bacteria</taxon>
        <taxon>Pseudomonadati</taxon>
        <taxon>Pseudomonadota</taxon>
        <taxon>Alphaproteobacteria</taxon>
        <taxon>Caulobacterales</taxon>
        <taxon>Caulobacteraceae</taxon>
        <taxon>Caulobacter</taxon>
    </lineage>
</organism>
<name>TRUB_CAUVC</name>
<feature type="chain" id="PRO_0000121814" description="tRNA pseudouridine synthase B">
    <location>
        <begin position="1"/>
        <end position="310"/>
    </location>
</feature>
<feature type="active site" description="Nucleophile" evidence="1">
    <location>
        <position position="47"/>
    </location>
</feature>
<gene>
    <name evidence="1" type="primary">truB</name>
    <name type="ordered locus">CC_0036</name>
</gene>